<organism>
    <name type="scientific">Escherichia coli (strain K12)</name>
    <dbReference type="NCBI Taxonomy" id="83333"/>
    <lineage>
        <taxon>Bacteria</taxon>
        <taxon>Pseudomonadati</taxon>
        <taxon>Pseudomonadota</taxon>
        <taxon>Gammaproteobacteria</taxon>
        <taxon>Enterobacterales</taxon>
        <taxon>Enterobacteriaceae</taxon>
        <taxon>Escherichia</taxon>
    </lineage>
</organism>
<reference key="1">
    <citation type="journal article" date="1994" name="Gene">
        <title>Escherichia coli contains a set of genes homologous to those involved in protein secretion, DNA uptake and the assembly of type-4 fimbriae in other bacteria.</title>
        <authorList>
            <person name="Whitchurch C.B."/>
            <person name="Mattick J.S."/>
        </authorList>
    </citation>
    <scope>NUCLEOTIDE SEQUENCE [GENOMIC DNA]</scope>
    <source>
        <strain>K12</strain>
    </source>
</reference>
<reference key="2">
    <citation type="journal article" date="1994" name="Nucleic Acids Res.">
        <title>Systematic sequencing of the Escherichia coli genome: analysis of the 2.4-4.1 min (110,917-193,643 bp) region.</title>
        <authorList>
            <person name="Fujita N."/>
            <person name="Mori H."/>
            <person name="Yura T."/>
            <person name="Ishihama A."/>
        </authorList>
    </citation>
    <scope>NUCLEOTIDE SEQUENCE [LARGE SCALE GENOMIC DNA]</scope>
    <source>
        <strain>K12 / W3110 / ATCC 27325 / DSM 5911</strain>
    </source>
</reference>
<reference key="3">
    <citation type="journal article" date="1997" name="Science">
        <title>The complete genome sequence of Escherichia coli K-12.</title>
        <authorList>
            <person name="Blattner F.R."/>
            <person name="Plunkett G. III"/>
            <person name="Bloch C.A."/>
            <person name="Perna N.T."/>
            <person name="Burland V."/>
            <person name="Riley M."/>
            <person name="Collado-Vides J."/>
            <person name="Glasner J.D."/>
            <person name="Rode C.K."/>
            <person name="Mayhew G.F."/>
            <person name="Gregor J."/>
            <person name="Davis N.W."/>
            <person name="Kirkpatrick H.A."/>
            <person name="Goeden M.A."/>
            <person name="Rose D.J."/>
            <person name="Mau B."/>
            <person name="Shao Y."/>
        </authorList>
    </citation>
    <scope>NUCLEOTIDE SEQUENCE [LARGE SCALE GENOMIC DNA]</scope>
    <source>
        <strain>K12 / MG1655 / ATCC 47076</strain>
    </source>
</reference>
<reference key="4">
    <citation type="journal article" date="2006" name="Mol. Syst. Biol.">
        <title>Highly accurate genome sequences of Escherichia coli K-12 strains MG1655 and W3110.</title>
        <authorList>
            <person name="Hayashi K."/>
            <person name="Morooka N."/>
            <person name="Yamamoto Y."/>
            <person name="Fujita K."/>
            <person name="Isono K."/>
            <person name="Choi S."/>
            <person name="Ohtsubo E."/>
            <person name="Baba T."/>
            <person name="Wanner B.L."/>
            <person name="Mori H."/>
            <person name="Horiuchi T."/>
        </authorList>
    </citation>
    <scope>NUCLEOTIDE SEQUENCE [LARGE SCALE GENOMIC DNA]</scope>
    <scope>SEQUENCE REVISION</scope>
    <source>
        <strain>K12 / W3110 / ATCC 27325 / DSM 5911</strain>
    </source>
</reference>
<reference key="5">
    <citation type="journal article" date="1988" name="Biochem. J.">
        <title>Nucleotide sequence of the gene encoding the GMP reductase of Escherichia coli K12.</title>
        <authorList>
            <person name="Andrews S.C."/>
            <person name="Guest J.R."/>
        </authorList>
    </citation>
    <scope>NUCLEOTIDE SEQUENCE [GENOMIC DNA] OF 165-400</scope>
    <source>
        <strain>K12</strain>
    </source>
</reference>
<reference key="6">
    <citation type="journal article" date="2005" name="Science">
        <title>Global topology analysis of the Escherichia coli inner membrane proteome.</title>
        <authorList>
            <person name="Daley D.O."/>
            <person name="Rapp M."/>
            <person name="Granseth E."/>
            <person name="Melen K."/>
            <person name="Drew D."/>
            <person name="von Heijne G."/>
        </authorList>
    </citation>
    <scope>SUBCELLULAR LOCATION</scope>
    <source>
        <strain>K12 / MG1655 / ATCC 47076</strain>
    </source>
</reference>
<protein>
    <recommendedName>
        <fullName>Protein transport protein HofC homolog</fullName>
    </recommendedName>
</protein>
<gene>
    <name type="primary">hofC</name>
    <name type="synonym">hopC</name>
    <name type="synonym">yacD</name>
    <name type="ordered locus">b0106</name>
    <name type="ordered locus">JW0102</name>
</gene>
<proteinExistence type="inferred from homology"/>
<comment type="subcellular location">
    <subcellularLocation>
        <location evidence="2">Cell inner membrane</location>
        <topology evidence="2">Multi-pass membrane protein</topology>
    </subcellularLocation>
</comment>
<comment type="similarity">
    <text evidence="3">Belongs to the GSP F family.</text>
</comment>
<comment type="sequence caution" evidence="3">
    <conflict type="frameshift">
        <sequence resource="EMBL" id="X07917"/>
    </conflict>
</comment>
<accession>P36646</accession>
<accession>P75648</accession>
<accession>Q47020</accession>
<accession>Q47021</accession>
<evidence type="ECO:0000255" key="1"/>
<evidence type="ECO:0000269" key="2">
    <source>
    </source>
</evidence>
<evidence type="ECO:0000305" key="3"/>
<dbReference type="EMBL" id="L28105">
    <property type="protein sequence ID" value="AAC36925.1"/>
    <property type="molecule type" value="Genomic_DNA"/>
</dbReference>
<dbReference type="EMBL" id="U00096">
    <property type="protein sequence ID" value="AAC73217.1"/>
    <property type="molecule type" value="Genomic_DNA"/>
</dbReference>
<dbReference type="EMBL" id="AP009048">
    <property type="protein sequence ID" value="BAB96674.2"/>
    <property type="molecule type" value="Genomic_DNA"/>
</dbReference>
<dbReference type="EMBL" id="X07917">
    <property type="status" value="NOT_ANNOTATED_CDS"/>
    <property type="molecule type" value="Genomic_DNA"/>
</dbReference>
<dbReference type="PIR" id="B64733">
    <property type="entry name" value="B64733"/>
</dbReference>
<dbReference type="RefSeq" id="NP_414648.1">
    <property type="nucleotide sequence ID" value="NC_000913.3"/>
</dbReference>
<dbReference type="RefSeq" id="WP_000157266.1">
    <property type="nucleotide sequence ID" value="NZ_SSZK01000004.1"/>
</dbReference>
<dbReference type="SMR" id="P36646"/>
<dbReference type="BioGRID" id="4261120">
    <property type="interactions" value="155"/>
</dbReference>
<dbReference type="FunCoup" id="P36646">
    <property type="interactions" value="95"/>
</dbReference>
<dbReference type="STRING" id="511145.b0106"/>
<dbReference type="PaxDb" id="511145-b0106"/>
<dbReference type="EnsemblBacteria" id="AAC73217">
    <property type="protein sequence ID" value="AAC73217"/>
    <property type="gene ID" value="b0106"/>
</dbReference>
<dbReference type="GeneID" id="945806"/>
<dbReference type="KEGG" id="ecj:JW0102"/>
<dbReference type="KEGG" id="eco:b0106"/>
<dbReference type="KEGG" id="ecoc:C3026_00430"/>
<dbReference type="PATRIC" id="fig|1411691.4.peg.2176"/>
<dbReference type="EchoBASE" id="EB1746"/>
<dbReference type="eggNOG" id="COG1459">
    <property type="taxonomic scope" value="Bacteria"/>
</dbReference>
<dbReference type="HOGENOM" id="CLU_035032_2_0_6"/>
<dbReference type="InParanoid" id="P36646"/>
<dbReference type="OMA" id="TRQMATM"/>
<dbReference type="OrthoDB" id="9805682at2"/>
<dbReference type="PhylomeDB" id="P36646"/>
<dbReference type="BioCyc" id="EcoCyc:EG11798-MONOMER"/>
<dbReference type="PRO" id="PR:P36646"/>
<dbReference type="Proteomes" id="UP000000625">
    <property type="component" value="Chromosome"/>
</dbReference>
<dbReference type="GO" id="GO:0005886">
    <property type="term" value="C:plasma membrane"/>
    <property type="evidence" value="ECO:0000314"/>
    <property type="project" value="EcoCyc"/>
</dbReference>
<dbReference type="GO" id="GO:0015628">
    <property type="term" value="P:protein secretion by the type II secretion system"/>
    <property type="evidence" value="ECO:0000318"/>
    <property type="project" value="GO_Central"/>
</dbReference>
<dbReference type="FunFam" id="1.20.81.30:FF:000001">
    <property type="entry name" value="Type II secretion system protein F"/>
    <property type="match status" value="2"/>
</dbReference>
<dbReference type="Gene3D" id="1.20.81.30">
    <property type="entry name" value="Type II secretion system (T2SS), domain F"/>
    <property type="match status" value="2"/>
</dbReference>
<dbReference type="InterPro" id="IPR003004">
    <property type="entry name" value="GspF/PilC"/>
</dbReference>
<dbReference type="InterPro" id="IPR001992">
    <property type="entry name" value="T2SS_GspF/T4SS_PilC_CS"/>
</dbReference>
<dbReference type="InterPro" id="IPR018076">
    <property type="entry name" value="T2SS_GspF_dom"/>
</dbReference>
<dbReference type="InterPro" id="IPR042094">
    <property type="entry name" value="T2SS_GspF_sf"/>
</dbReference>
<dbReference type="NCBIfam" id="NF007861">
    <property type="entry name" value="PRK10573.1"/>
    <property type="match status" value="1"/>
</dbReference>
<dbReference type="PANTHER" id="PTHR30012">
    <property type="entry name" value="GENERAL SECRETION PATHWAY PROTEIN"/>
    <property type="match status" value="1"/>
</dbReference>
<dbReference type="PANTHER" id="PTHR30012:SF7">
    <property type="entry name" value="PROTEIN TRANSPORT PROTEIN HOFC HOMOLOG"/>
    <property type="match status" value="1"/>
</dbReference>
<dbReference type="Pfam" id="PF00482">
    <property type="entry name" value="T2SSF"/>
    <property type="match status" value="2"/>
</dbReference>
<dbReference type="PRINTS" id="PR00812">
    <property type="entry name" value="BCTERIALGSPF"/>
</dbReference>
<dbReference type="PROSITE" id="PS00874">
    <property type="entry name" value="T2SP_F"/>
    <property type="match status" value="1"/>
</dbReference>
<sequence>MASKQLWRWHGITGDGNAQDGMLWAESRTLLLMALQQQMVTPLSLKRIAINSAQWRGDKSAEVIHQLATLLKAGLTLSEGLALLAEQHPSKQWQALLQSLAHDLEQGIAFSNALLPWSEVFPPLYQAMIRTGELTGKLDECCFELARQQKAQRQLTDKVKSALRYPIIILAMAIMVVVAMLHFVLPEFAAIYKTFNTPLPALTQGIMTLADFSGEWSWLLVLFGFLLAIANKLLMRRPTWLIVRQKLLLRIPIMGSLMRGQKLTQIFTILALTQSAGITFLQGVESVRETMRCPYWVQLLTQIQHDISNGQPIWLALKNTGEFSPLCLQLVRTGEASGSLDLMLDNLAHHHRENTMALADNLAALLEPALLIITGGIIGTLVVAMYLPIFHLGDAMSGMG</sequence>
<name>HOFC_ECOLI</name>
<keyword id="KW-0997">Cell inner membrane</keyword>
<keyword id="KW-1003">Cell membrane</keyword>
<keyword id="KW-0472">Membrane</keyword>
<keyword id="KW-1185">Reference proteome</keyword>
<keyword id="KW-0812">Transmembrane</keyword>
<keyword id="KW-1133">Transmembrane helix</keyword>
<keyword id="KW-0813">Transport</keyword>
<feature type="chain" id="PRO_0000207845" description="Protein transport protein HofC homolog">
    <location>
        <begin position="1"/>
        <end position="400"/>
    </location>
</feature>
<feature type="transmembrane region" description="Helical" evidence="1">
    <location>
        <begin position="165"/>
        <end position="185"/>
    </location>
</feature>
<feature type="transmembrane region" description="Helical" evidence="1">
    <location>
        <begin position="209"/>
        <end position="229"/>
    </location>
</feature>
<feature type="transmembrane region" description="Helical" evidence="1">
    <location>
        <begin position="370"/>
        <end position="390"/>
    </location>
</feature>
<feature type="sequence conflict" description="In Ref. 1; AAC36925." evidence="3" ref="1">
    <original>MASKQLWRWHGITGDGNAQDGMLWAESRTLLLMALQQQM</original>
    <variation>MAVSNSGAGMAYAQVVLTT</variation>
    <location>
        <begin position="1"/>
        <end position="39"/>
    </location>
</feature>